<name>LEU3_NEIG1</name>
<reference key="1">
    <citation type="submission" date="2003-03" db="EMBL/GenBank/DDBJ databases">
        <title>The complete genome sequence of Neisseria gonorrhoeae.</title>
        <authorList>
            <person name="Lewis L.A."/>
            <person name="Gillaspy A.F."/>
            <person name="McLaughlin R.E."/>
            <person name="Gipson M."/>
            <person name="Ducey T.F."/>
            <person name="Ownbey T."/>
            <person name="Hartman K."/>
            <person name="Nydick C."/>
            <person name="Carson M.B."/>
            <person name="Vaughn J."/>
            <person name="Thomson C."/>
            <person name="Song L."/>
            <person name="Lin S."/>
            <person name="Yuan X."/>
            <person name="Najar F."/>
            <person name="Zhan M."/>
            <person name="Ren Q."/>
            <person name="Zhu H."/>
            <person name="Qi S."/>
            <person name="Kenton S.M."/>
            <person name="Lai H."/>
            <person name="White J.D."/>
            <person name="Clifton S."/>
            <person name="Roe B.A."/>
            <person name="Dyer D.W."/>
        </authorList>
    </citation>
    <scope>NUCLEOTIDE SEQUENCE [LARGE SCALE GENOMIC DNA]</scope>
    <source>
        <strain>ATCC 700825 / FA 1090</strain>
    </source>
</reference>
<accession>Q5F8T6</accession>
<feature type="chain" id="PRO_0000083709" description="3-isopropylmalate dehydrogenase">
    <location>
        <begin position="1"/>
        <end position="356"/>
    </location>
</feature>
<feature type="binding site" evidence="1">
    <location>
        <position position="95"/>
    </location>
    <ligand>
        <name>substrate</name>
    </ligand>
</feature>
<feature type="binding site" evidence="1">
    <location>
        <position position="105"/>
    </location>
    <ligand>
        <name>substrate</name>
    </ligand>
</feature>
<feature type="binding site" evidence="1">
    <location>
        <position position="133"/>
    </location>
    <ligand>
        <name>substrate</name>
    </ligand>
</feature>
<feature type="binding site" evidence="1">
    <location>
        <position position="223"/>
    </location>
    <ligand>
        <name>Mg(2+)</name>
        <dbReference type="ChEBI" id="CHEBI:18420"/>
    </ligand>
</feature>
<feature type="binding site" evidence="1">
    <location>
        <position position="223"/>
    </location>
    <ligand>
        <name>substrate</name>
    </ligand>
</feature>
<feature type="binding site" evidence="1">
    <location>
        <position position="247"/>
    </location>
    <ligand>
        <name>Mg(2+)</name>
        <dbReference type="ChEBI" id="CHEBI:18420"/>
    </ligand>
</feature>
<feature type="binding site" evidence="1">
    <location>
        <position position="251"/>
    </location>
    <ligand>
        <name>Mg(2+)</name>
        <dbReference type="ChEBI" id="CHEBI:18420"/>
    </ligand>
</feature>
<feature type="binding site" evidence="1">
    <location>
        <begin position="281"/>
        <end position="293"/>
    </location>
    <ligand>
        <name>NAD(+)</name>
        <dbReference type="ChEBI" id="CHEBI:57540"/>
    </ligand>
</feature>
<feature type="site" description="Important for catalysis" evidence="1">
    <location>
        <position position="140"/>
    </location>
</feature>
<feature type="site" description="Important for catalysis" evidence="1">
    <location>
        <position position="191"/>
    </location>
</feature>
<protein>
    <recommendedName>
        <fullName evidence="1">3-isopropylmalate dehydrogenase</fullName>
        <ecNumber evidence="1">1.1.1.85</ecNumber>
    </recommendedName>
    <alternativeName>
        <fullName evidence="1">3-IPM-DH</fullName>
    </alternativeName>
    <alternativeName>
        <fullName evidence="1">Beta-IPM dehydrogenase</fullName>
        <shortName evidence="1">IMDH</shortName>
    </alternativeName>
</protein>
<keyword id="KW-0028">Amino-acid biosynthesis</keyword>
<keyword id="KW-0100">Branched-chain amino acid biosynthesis</keyword>
<keyword id="KW-0963">Cytoplasm</keyword>
<keyword id="KW-0432">Leucine biosynthesis</keyword>
<keyword id="KW-0460">Magnesium</keyword>
<keyword id="KW-0464">Manganese</keyword>
<keyword id="KW-0479">Metal-binding</keyword>
<keyword id="KW-0520">NAD</keyword>
<keyword id="KW-0560">Oxidoreductase</keyword>
<keyword id="KW-1185">Reference proteome</keyword>
<dbReference type="EC" id="1.1.1.85" evidence="1"/>
<dbReference type="EMBL" id="AE004969">
    <property type="protein sequence ID" value="AAW89401.1"/>
    <property type="molecule type" value="Genomic_DNA"/>
</dbReference>
<dbReference type="RefSeq" id="WP_003697157.1">
    <property type="nucleotide sequence ID" value="NC_002946.2"/>
</dbReference>
<dbReference type="RefSeq" id="YP_207813.1">
    <property type="nucleotide sequence ID" value="NC_002946.2"/>
</dbReference>
<dbReference type="SMR" id="Q5F8T6"/>
<dbReference type="STRING" id="242231.NGO_0674"/>
<dbReference type="KEGG" id="ngo:NGO_0674"/>
<dbReference type="PATRIC" id="fig|242231.10.peg.795"/>
<dbReference type="HOGENOM" id="CLU_031953_0_3_4"/>
<dbReference type="UniPathway" id="UPA00048">
    <property type="reaction ID" value="UER00072"/>
</dbReference>
<dbReference type="Proteomes" id="UP000000535">
    <property type="component" value="Chromosome"/>
</dbReference>
<dbReference type="GO" id="GO:0005829">
    <property type="term" value="C:cytosol"/>
    <property type="evidence" value="ECO:0007669"/>
    <property type="project" value="TreeGrafter"/>
</dbReference>
<dbReference type="GO" id="GO:0003862">
    <property type="term" value="F:3-isopropylmalate dehydrogenase activity"/>
    <property type="evidence" value="ECO:0007669"/>
    <property type="project" value="UniProtKB-UniRule"/>
</dbReference>
<dbReference type="GO" id="GO:0000287">
    <property type="term" value="F:magnesium ion binding"/>
    <property type="evidence" value="ECO:0007669"/>
    <property type="project" value="InterPro"/>
</dbReference>
<dbReference type="GO" id="GO:0051287">
    <property type="term" value="F:NAD binding"/>
    <property type="evidence" value="ECO:0007669"/>
    <property type="project" value="InterPro"/>
</dbReference>
<dbReference type="GO" id="GO:0009098">
    <property type="term" value="P:L-leucine biosynthetic process"/>
    <property type="evidence" value="ECO:0007669"/>
    <property type="project" value="UniProtKB-UniRule"/>
</dbReference>
<dbReference type="FunFam" id="3.40.718.10:FF:000004">
    <property type="entry name" value="3-isopropylmalate dehydrogenase"/>
    <property type="match status" value="1"/>
</dbReference>
<dbReference type="Gene3D" id="3.40.718.10">
    <property type="entry name" value="Isopropylmalate Dehydrogenase"/>
    <property type="match status" value="1"/>
</dbReference>
<dbReference type="HAMAP" id="MF_01033">
    <property type="entry name" value="LeuB_type1"/>
    <property type="match status" value="1"/>
</dbReference>
<dbReference type="InterPro" id="IPR019818">
    <property type="entry name" value="IsoCit/isopropylmalate_DH_CS"/>
</dbReference>
<dbReference type="InterPro" id="IPR024084">
    <property type="entry name" value="IsoPropMal-DH-like_dom"/>
</dbReference>
<dbReference type="InterPro" id="IPR004429">
    <property type="entry name" value="Isopropylmalate_DH"/>
</dbReference>
<dbReference type="NCBIfam" id="TIGR00169">
    <property type="entry name" value="leuB"/>
    <property type="match status" value="1"/>
</dbReference>
<dbReference type="PANTHER" id="PTHR42979">
    <property type="entry name" value="3-ISOPROPYLMALATE DEHYDROGENASE"/>
    <property type="match status" value="1"/>
</dbReference>
<dbReference type="PANTHER" id="PTHR42979:SF1">
    <property type="entry name" value="3-ISOPROPYLMALATE DEHYDROGENASE"/>
    <property type="match status" value="1"/>
</dbReference>
<dbReference type="Pfam" id="PF00180">
    <property type="entry name" value="Iso_dh"/>
    <property type="match status" value="1"/>
</dbReference>
<dbReference type="SMART" id="SM01329">
    <property type="entry name" value="Iso_dh"/>
    <property type="match status" value="1"/>
</dbReference>
<dbReference type="SUPFAM" id="SSF53659">
    <property type="entry name" value="Isocitrate/Isopropylmalate dehydrogenase-like"/>
    <property type="match status" value="1"/>
</dbReference>
<dbReference type="PROSITE" id="PS00470">
    <property type="entry name" value="IDH_IMDH"/>
    <property type="match status" value="1"/>
</dbReference>
<organism>
    <name type="scientific">Neisseria gonorrhoeae (strain ATCC 700825 / FA 1090)</name>
    <dbReference type="NCBI Taxonomy" id="242231"/>
    <lineage>
        <taxon>Bacteria</taxon>
        <taxon>Pseudomonadati</taxon>
        <taxon>Pseudomonadota</taxon>
        <taxon>Betaproteobacteria</taxon>
        <taxon>Neisseriales</taxon>
        <taxon>Neisseriaceae</taxon>
        <taxon>Neisseria</taxon>
    </lineage>
</organism>
<proteinExistence type="inferred from homology"/>
<comment type="function">
    <text evidence="1">Catalyzes the oxidation of 3-carboxy-2-hydroxy-4-methylpentanoate (3-isopropylmalate) to 3-carboxy-4-methyl-2-oxopentanoate. The product decarboxylates to 4-methyl-2 oxopentanoate.</text>
</comment>
<comment type="catalytic activity">
    <reaction evidence="1">
        <text>(2R,3S)-3-isopropylmalate + NAD(+) = 4-methyl-2-oxopentanoate + CO2 + NADH</text>
        <dbReference type="Rhea" id="RHEA:32271"/>
        <dbReference type="ChEBI" id="CHEBI:16526"/>
        <dbReference type="ChEBI" id="CHEBI:17865"/>
        <dbReference type="ChEBI" id="CHEBI:35121"/>
        <dbReference type="ChEBI" id="CHEBI:57540"/>
        <dbReference type="ChEBI" id="CHEBI:57945"/>
        <dbReference type="EC" id="1.1.1.85"/>
    </reaction>
</comment>
<comment type="cofactor">
    <cofactor evidence="1">
        <name>Mg(2+)</name>
        <dbReference type="ChEBI" id="CHEBI:18420"/>
    </cofactor>
    <cofactor evidence="1">
        <name>Mn(2+)</name>
        <dbReference type="ChEBI" id="CHEBI:29035"/>
    </cofactor>
    <text evidence="1">Binds 1 Mg(2+) or Mn(2+) ion per subunit.</text>
</comment>
<comment type="pathway">
    <text evidence="1">Amino-acid biosynthesis; L-leucine biosynthesis; L-leucine from 3-methyl-2-oxobutanoate: step 3/4.</text>
</comment>
<comment type="subunit">
    <text evidence="1">Homodimer.</text>
</comment>
<comment type="subcellular location">
    <subcellularLocation>
        <location evidence="1">Cytoplasm</location>
    </subcellularLocation>
</comment>
<comment type="similarity">
    <text evidence="1">Belongs to the isocitrate and isopropylmalate dehydrogenases family. LeuB type 1 subfamily.</text>
</comment>
<gene>
    <name evidence="1" type="primary">leuB</name>
    <name type="ordered locus">NGO_0674</name>
</gene>
<sequence>MTKHIAILRGDGIGPEIVAETVRVLDKFIAQGLDADYEYAPLGGEAYDEYGHPYPEFTQNLCRKADAVLLGAVGSPQYDNLDRPLRPERGLLAIRKDLNLFANLRPAVLYPELANASTLKPEIVAGLDILIVRELTGDIYFGEPRGIRVLENGEHEGYNTMKYSESEIRRIAHVAFQSAQKRSKKVCSVGKANVLETTELWREIFEEIGKQYPDVELSHMYVDNAAMQLVRAPKQFDVIATGNIFGDILSDEASMLTGSIGMLPSASLDENGKGLYEPSHGSAPDIAGQNKANPLATILSLAMLLRYSLNDEARAQQVENSVQKVLQQGLRTGDIYEEGTKLVSCSEMGDAVLAAL</sequence>
<evidence type="ECO:0000255" key="1">
    <source>
        <dbReference type="HAMAP-Rule" id="MF_01033"/>
    </source>
</evidence>